<keyword id="KW-0067">ATP-binding</keyword>
<keyword id="KW-0963">Cytoplasm</keyword>
<keyword id="KW-0227">DNA damage</keyword>
<keyword id="KW-0228">DNA excision</keyword>
<keyword id="KW-0234">DNA repair</keyword>
<keyword id="KW-0267">Excision nuclease</keyword>
<keyword id="KW-0347">Helicase</keyword>
<keyword id="KW-0378">Hydrolase</keyword>
<keyword id="KW-0547">Nucleotide-binding</keyword>
<keyword id="KW-1185">Reference proteome</keyword>
<keyword id="KW-0742">SOS response</keyword>
<evidence type="ECO:0000255" key="1">
    <source>
        <dbReference type="HAMAP-Rule" id="MF_00204"/>
    </source>
</evidence>
<name>UVRB_SYNE7</name>
<comment type="function">
    <text evidence="1">The UvrABC repair system catalyzes the recognition and processing of DNA lesions. A damage recognition complex composed of 2 UvrA and 2 UvrB subunits scans DNA for abnormalities. Upon binding of the UvrA(2)B(2) complex to a putative damaged site, the DNA wraps around one UvrB monomer. DNA wrap is dependent on ATP binding by UvrB and probably causes local melting of the DNA helix, facilitating insertion of UvrB beta-hairpin between the DNA strands. Then UvrB probes one DNA strand for the presence of a lesion. If a lesion is found the UvrA subunits dissociate and the UvrB-DNA preincision complex is formed. This complex is subsequently bound by UvrC and the second UvrB is released. If no lesion is found, the DNA wraps around the other UvrB subunit that will check the other stand for damage.</text>
</comment>
<comment type="subunit">
    <text evidence="1">Forms a heterotetramer with UvrA during the search for lesions. Interacts with UvrC in an incision complex.</text>
</comment>
<comment type="subcellular location">
    <subcellularLocation>
        <location evidence="1">Cytoplasm</location>
    </subcellularLocation>
</comment>
<comment type="domain">
    <text evidence="1">The beta-hairpin motif is involved in DNA binding.</text>
</comment>
<comment type="similarity">
    <text evidence="1">Belongs to the UvrB family.</text>
</comment>
<protein>
    <recommendedName>
        <fullName evidence="1">UvrABC system protein B</fullName>
        <shortName evidence="1">Protein UvrB</shortName>
    </recommendedName>
    <alternativeName>
        <fullName evidence="1">Excinuclease ABC subunit B</fullName>
    </alternativeName>
</protein>
<proteinExistence type="inferred from homology"/>
<accession>Q31QS4</accession>
<dbReference type="EMBL" id="CP000100">
    <property type="protein sequence ID" value="ABB56595.1"/>
    <property type="molecule type" value="Genomic_DNA"/>
</dbReference>
<dbReference type="RefSeq" id="WP_011243271.1">
    <property type="nucleotide sequence ID" value="NZ_JACJTX010000002.1"/>
</dbReference>
<dbReference type="SMR" id="Q31QS4"/>
<dbReference type="STRING" id="1140.Synpcc7942_0563"/>
<dbReference type="PaxDb" id="1140-Synpcc7942_0563"/>
<dbReference type="GeneID" id="72429388"/>
<dbReference type="KEGG" id="syf:Synpcc7942_0563"/>
<dbReference type="eggNOG" id="COG0556">
    <property type="taxonomic scope" value="Bacteria"/>
</dbReference>
<dbReference type="HOGENOM" id="CLU_009621_2_1_3"/>
<dbReference type="OrthoDB" id="9806651at2"/>
<dbReference type="BioCyc" id="SYNEL:SYNPCC7942_0563-MONOMER"/>
<dbReference type="Proteomes" id="UP000889800">
    <property type="component" value="Chromosome"/>
</dbReference>
<dbReference type="GO" id="GO:0005737">
    <property type="term" value="C:cytoplasm"/>
    <property type="evidence" value="ECO:0007669"/>
    <property type="project" value="UniProtKB-SubCell"/>
</dbReference>
<dbReference type="GO" id="GO:0009380">
    <property type="term" value="C:excinuclease repair complex"/>
    <property type="evidence" value="ECO:0007669"/>
    <property type="project" value="InterPro"/>
</dbReference>
<dbReference type="GO" id="GO:0005524">
    <property type="term" value="F:ATP binding"/>
    <property type="evidence" value="ECO:0007669"/>
    <property type="project" value="UniProtKB-UniRule"/>
</dbReference>
<dbReference type="GO" id="GO:0016887">
    <property type="term" value="F:ATP hydrolysis activity"/>
    <property type="evidence" value="ECO:0007669"/>
    <property type="project" value="InterPro"/>
</dbReference>
<dbReference type="GO" id="GO:0003677">
    <property type="term" value="F:DNA binding"/>
    <property type="evidence" value="ECO:0007669"/>
    <property type="project" value="UniProtKB-UniRule"/>
</dbReference>
<dbReference type="GO" id="GO:0009381">
    <property type="term" value="F:excinuclease ABC activity"/>
    <property type="evidence" value="ECO:0007669"/>
    <property type="project" value="UniProtKB-UniRule"/>
</dbReference>
<dbReference type="GO" id="GO:0004386">
    <property type="term" value="F:helicase activity"/>
    <property type="evidence" value="ECO:0007669"/>
    <property type="project" value="UniProtKB-KW"/>
</dbReference>
<dbReference type="GO" id="GO:0006289">
    <property type="term" value="P:nucleotide-excision repair"/>
    <property type="evidence" value="ECO:0007669"/>
    <property type="project" value="UniProtKB-UniRule"/>
</dbReference>
<dbReference type="GO" id="GO:0009432">
    <property type="term" value="P:SOS response"/>
    <property type="evidence" value="ECO:0007669"/>
    <property type="project" value="UniProtKB-UniRule"/>
</dbReference>
<dbReference type="CDD" id="cd17916">
    <property type="entry name" value="DEXHc_UvrB"/>
    <property type="match status" value="1"/>
</dbReference>
<dbReference type="CDD" id="cd18790">
    <property type="entry name" value="SF2_C_UvrB"/>
    <property type="match status" value="1"/>
</dbReference>
<dbReference type="Gene3D" id="3.40.50.300">
    <property type="entry name" value="P-loop containing nucleotide triphosphate hydrolases"/>
    <property type="match status" value="3"/>
</dbReference>
<dbReference type="Gene3D" id="4.10.860.10">
    <property type="entry name" value="UVR domain"/>
    <property type="match status" value="1"/>
</dbReference>
<dbReference type="HAMAP" id="MF_00204">
    <property type="entry name" value="UvrB"/>
    <property type="match status" value="1"/>
</dbReference>
<dbReference type="InterPro" id="IPR006935">
    <property type="entry name" value="Helicase/UvrB_N"/>
</dbReference>
<dbReference type="InterPro" id="IPR014001">
    <property type="entry name" value="Helicase_ATP-bd"/>
</dbReference>
<dbReference type="InterPro" id="IPR001650">
    <property type="entry name" value="Helicase_C-like"/>
</dbReference>
<dbReference type="InterPro" id="IPR027417">
    <property type="entry name" value="P-loop_NTPase"/>
</dbReference>
<dbReference type="InterPro" id="IPR001943">
    <property type="entry name" value="UVR_dom"/>
</dbReference>
<dbReference type="InterPro" id="IPR036876">
    <property type="entry name" value="UVR_dom_sf"/>
</dbReference>
<dbReference type="InterPro" id="IPR004807">
    <property type="entry name" value="UvrB"/>
</dbReference>
<dbReference type="InterPro" id="IPR041471">
    <property type="entry name" value="UvrB_inter"/>
</dbReference>
<dbReference type="InterPro" id="IPR024759">
    <property type="entry name" value="UvrB_YAD/RRR_dom"/>
</dbReference>
<dbReference type="NCBIfam" id="NF003673">
    <property type="entry name" value="PRK05298.1"/>
    <property type="match status" value="1"/>
</dbReference>
<dbReference type="NCBIfam" id="TIGR00631">
    <property type="entry name" value="uvrb"/>
    <property type="match status" value="1"/>
</dbReference>
<dbReference type="PANTHER" id="PTHR24029">
    <property type="entry name" value="UVRABC SYSTEM PROTEIN B"/>
    <property type="match status" value="1"/>
</dbReference>
<dbReference type="PANTHER" id="PTHR24029:SF0">
    <property type="entry name" value="UVRABC SYSTEM PROTEIN B"/>
    <property type="match status" value="1"/>
</dbReference>
<dbReference type="Pfam" id="PF00271">
    <property type="entry name" value="Helicase_C"/>
    <property type="match status" value="1"/>
</dbReference>
<dbReference type="Pfam" id="PF04851">
    <property type="entry name" value="ResIII"/>
    <property type="match status" value="1"/>
</dbReference>
<dbReference type="Pfam" id="PF02151">
    <property type="entry name" value="UVR"/>
    <property type="match status" value="1"/>
</dbReference>
<dbReference type="Pfam" id="PF12344">
    <property type="entry name" value="UvrB"/>
    <property type="match status" value="1"/>
</dbReference>
<dbReference type="Pfam" id="PF17757">
    <property type="entry name" value="UvrB_inter"/>
    <property type="match status" value="1"/>
</dbReference>
<dbReference type="SMART" id="SM00487">
    <property type="entry name" value="DEXDc"/>
    <property type="match status" value="1"/>
</dbReference>
<dbReference type="SMART" id="SM00490">
    <property type="entry name" value="HELICc"/>
    <property type="match status" value="1"/>
</dbReference>
<dbReference type="SUPFAM" id="SSF46600">
    <property type="entry name" value="C-terminal UvrC-binding domain of UvrB"/>
    <property type="match status" value="1"/>
</dbReference>
<dbReference type="SUPFAM" id="SSF52540">
    <property type="entry name" value="P-loop containing nucleoside triphosphate hydrolases"/>
    <property type="match status" value="2"/>
</dbReference>
<dbReference type="PROSITE" id="PS51192">
    <property type="entry name" value="HELICASE_ATP_BIND_1"/>
    <property type="match status" value="1"/>
</dbReference>
<dbReference type="PROSITE" id="PS51194">
    <property type="entry name" value="HELICASE_CTER"/>
    <property type="match status" value="1"/>
</dbReference>
<dbReference type="PROSITE" id="PS50151">
    <property type="entry name" value="UVR"/>
    <property type="match status" value="1"/>
</dbReference>
<gene>
    <name evidence="1" type="primary">uvrB</name>
    <name type="ordered locus">Synpcc7942_0563</name>
</gene>
<sequence length="666" mass="76251">MTPFQLQARYQPMGDQPTAIAQLVEQVQAGAPYQTLLGATGTGKTFTIANVIAQVGRPALVLAHNKTLAAQLCNELREFFPNNAVEYFISYYDYYQPEAYIPVTDTYIAKTASINEEIDMLRHSATRNLFERRDVIVVASISCIYGLGIPSEYLKAAIPLEVGAEINMREVLRQLVDVQYSRNDLESGRGRFRVKGDVLEIGPAYEDRIIRVEFFGDEIDAIRYIDPVTGEILQSLDRLNIYPARHFVTPEERLEIAIAEIKEELNQQLLTLQAEGKLVEAQRLEQRTRYDLEMLQEVGYCNGVENYARHLAGREPGSPPECLIDYFPKDWLLVVDESHVTVPQLRGMYNGDQSRKKVLVDHGFRLPSAADNRPLKSEEFWEKVRQCIFVSATPGDWEIERSEEQIVEQVIRPTGVVDPEVFVRPTEGQVDDLLAEIQQRVRRQERALITTLTKRMAEDLTDYLSDRGVKVRYLHSEINSIERIEILQDLRNGDFDVLIGVNLLREGLDLPEVSLVAILDADKEGFLRTERSLIQTIGRAARHINGQAILYADRMTESMEKAISETERRRRIQLDYNQRHNITPQPIIKRSSNAILSFLEVSRRLNKQELEVAVSQADDLSLEEIPNLITQLEAQMKEAAKNLEFEEAAQYRDRIKKLRERLVGRH</sequence>
<organism>
    <name type="scientific">Synechococcus elongatus (strain ATCC 33912 / PCC 7942 / FACHB-805)</name>
    <name type="common">Anacystis nidulans R2</name>
    <dbReference type="NCBI Taxonomy" id="1140"/>
    <lineage>
        <taxon>Bacteria</taxon>
        <taxon>Bacillati</taxon>
        <taxon>Cyanobacteriota</taxon>
        <taxon>Cyanophyceae</taxon>
        <taxon>Synechococcales</taxon>
        <taxon>Synechococcaceae</taxon>
        <taxon>Synechococcus</taxon>
    </lineage>
</organism>
<feature type="chain" id="PRO_1000077936" description="UvrABC system protein B">
    <location>
        <begin position="1"/>
        <end position="666"/>
    </location>
</feature>
<feature type="domain" description="Helicase ATP-binding" evidence="1">
    <location>
        <begin position="25"/>
        <end position="176"/>
    </location>
</feature>
<feature type="domain" description="Helicase C-terminal" evidence="1">
    <location>
        <begin position="429"/>
        <end position="595"/>
    </location>
</feature>
<feature type="domain" description="UVR" evidence="1">
    <location>
        <begin position="626"/>
        <end position="661"/>
    </location>
</feature>
<feature type="short sequence motif" description="Beta-hairpin">
    <location>
        <begin position="91"/>
        <end position="114"/>
    </location>
</feature>
<feature type="binding site" evidence="1">
    <location>
        <begin position="38"/>
        <end position="45"/>
    </location>
    <ligand>
        <name>ATP</name>
        <dbReference type="ChEBI" id="CHEBI:30616"/>
    </ligand>
</feature>
<reference key="1">
    <citation type="submission" date="2005-08" db="EMBL/GenBank/DDBJ databases">
        <title>Complete sequence of chromosome 1 of Synechococcus elongatus PCC 7942.</title>
        <authorList>
            <consortium name="US DOE Joint Genome Institute"/>
            <person name="Copeland A."/>
            <person name="Lucas S."/>
            <person name="Lapidus A."/>
            <person name="Barry K."/>
            <person name="Detter J.C."/>
            <person name="Glavina T."/>
            <person name="Hammon N."/>
            <person name="Israni S."/>
            <person name="Pitluck S."/>
            <person name="Schmutz J."/>
            <person name="Larimer F."/>
            <person name="Land M."/>
            <person name="Kyrpides N."/>
            <person name="Lykidis A."/>
            <person name="Golden S."/>
            <person name="Richardson P."/>
        </authorList>
    </citation>
    <scope>NUCLEOTIDE SEQUENCE [LARGE SCALE GENOMIC DNA]</scope>
    <source>
        <strain>ATCC 33912 / PCC 7942 / FACHB-805</strain>
    </source>
</reference>